<evidence type="ECO:0000255" key="1">
    <source>
        <dbReference type="HAMAP-Rule" id="MF_04023"/>
    </source>
</evidence>
<evidence type="ECO:0000269" key="2">
    <source>
    </source>
</evidence>
<keyword id="KW-0002">3D-structure</keyword>
<keyword id="KW-1043">Host membrane</keyword>
<keyword id="KW-1048">Host nucleus</keyword>
<keyword id="KW-0472">Membrane</keyword>
<keyword id="KW-0479">Metal-binding</keyword>
<keyword id="KW-0597">Phosphoprotein</keyword>
<keyword id="KW-1185">Reference proteome</keyword>
<keyword id="KW-0862">Zinc</keyword>
<keyword id="KW-0863">Zinc-finger</keyword>
<protein>
    <recommendedName>
        <fullName evidence="1">Nuclear egress protein 1</fullName>
    </recommendedName>
</protein>
<accession>P0CK47</accession>
<accession>P03183</accession>
<accession>Q777G9</accession>
<sequence>MAPVTPDAVNARQQRPADPALRRLMHPHHRNYTASKASAHSVKSVSRCGKSRSELGRMERVGSVARSICSRHTRHGVDRSHFSLRDFFRGISANFELGKDFLREMNTPIHVSEAVFLPLSLCTLSPGRCLRLSPFGHSLTLGSHCEICINRSQVHVPQEFSSTQLSFFNNVHKIIPNKTFYVSLLSSSPSAVKAGLSQPSLLYAYLVTGHFCGTICPIFSTNGKGRLIMHLLLQGTSLHIPETCLKLLCENIGPTYELAVDLVGDAFCIKVSPRDTVYEKAVNVDEDAIYEAIKDLECGDELRLQIINYTQLILENKQ</sequence>
<comment type="function">
    <text evidence="1">Plays an essential role in virion nuclear egress, the first step of virion release from infected cell. Within the host nucleus, NEC1 interacts with the newly formed capsid through the vertexes and directs it to the inner nuclear membrane by associating with NEC2. Induces the budding of the capsid at the inner nuclear membrane as well as its envelopment into the perinuclear space. There, the NEC1/NEC2 complex promotes the fusion of the enveloped capsid with the outer nuclear membrane and the subsequent release of the viral capsid into the cytoplasm where it will reach the secondary budding sites in the host Golgi or trans-Golgi network.</text>
</comment>
<comment type="subunit">
    <text evidence="1 2">Forms a heterodimeric nuclear egress complex (NEC) with NEC2 (PubMed:35802751). 4 NEC further associate to form dimers (PubMed:35802751). Interacts with capsid vertex specific component 2/CVC2; this interaction directs the capsid to the host inner nuclear membrane to initiate budding.</text>
</comment>
<comment type="interaction">
    <interactant intactId="EBI-2620189">
        <id>P0CK47</id>
    </interactant>
    <interactant intactId="EBI-2620196">
        <id>P03185</id>
        <label>NEC2</label>
    </interactant>
    <organismsDiffer>false</organismsDiffer>
    <experiments>3</experiments>
</comment>
<comment type="subcellular location">
    <subcellularLocation>
        <location evidence="1">Host nucleus inner membrane</location>
    </subcellularLocation>
    <text evidence="1">Remains attached to the nucleus inner membrane through interaction with NEC2.</text>
</comment>
<comment type="PTM">
    <text evidence="1">Phosphorylated at serine residues in the N-terminus. This phosphorylation regulates the localization within the inner nuclear membrane.</text>
</comment>
<comment type="similarity">
    <text evidence="1">Belongs to the herpesviridae NEC1 protein family.</text>
</comment>
<organism>
    <name type="scientific">Epstein-Barr virus (strain B95-8)</name>
    <name type="common">HHV-4</name>
    <name type="synonym">Human herpesvirus 4</name>
    <dbReference type="NCBI Taxonomy" id="10377"/>
    <lineage>
        <taxon>Viruses</taxon>
        <taxon>Duplodnaviria</taxon>
        <taxon>Heunggongvirae</taxon>
        <taxon>Peploviricota</taxon>
        <taxon>Herviviricetes</taxon>
        <taxon>Herpesvirales</taxon>
        <taxon>Orthoherpesviridae</taxon>
        <taxon>Gammaherpesvirinae</taxon>
        <taxon>Lymphocryptovirus</taxon>
        <taxon>Lymphocryptovirus humangamma4</taxon>
        <taxon>Epstein-Barr virus (strain GD1)</taxon>
    </lineage>
</organism>
<reference key="1">
    <citation type="journal article" date="1984" name="Nature">
        <title>DNA sequence and expression of the B95-8 Epstein-Barr virus genome.</title>
        <authorList>
            <person name="Baer R."/>
            <person name="Bankier A.T."/>
            <person name="Biggin M.D."/>
            <person name="Deininger P.L."/>
            <person name="Farrell P.J."/>
            <person name="Gibson T.J."/>
            <person name="Hatfull G."/>
            <person name="Hudson G.S."/>
            <person name="Satchwell S.C."/>
            <person name="Seguin C."/>
            <person name="Tuffnell P.S."/>
            <person name="Barrell B.G."/>
        </authorList>
    </citation>
    <scope>NUCLEOTIDE SEQUENCE [LARGE SCALE GENOMIC DNA]</scope>
</reference>
<reference key="2">
    <citation type="journal article" date="1985" name="Virology">
        <title>The BamHI F region of the B95-8 Epstein-Barr virus genome.</title>
        <authorList>
            <person name="Hudson G.S."/>
            <person name="Gibson T.J."/>
            <person name="Barrell B.G."/>
        </authorList>
    </citation>
    <scope>NUCLEOTIDE SEQUENCE [GENOMIC DNA]</scope>
</reference>
<reference key="3">
    <citation type="journal article" date="2003" name="Virology">
        <title>Updated Epstein-Barr virus (EBV) DNA sequence and analysis of a promoter for the BART (CST, BARF0) RNAs of EBV.</title>
        <authorList>
            <person name="de Jesus O."/>
            <person name="Smith P.R."/>
            <person name="Spender L.C."/>
            <person name="Elgueta Karstegl C."/>
            <person name="Niller H.H."/>
            <person name="Huang D."/>
            <person name="Farrell P.J."/>
        </authorList>
    </citation>
    <scope>GENOME REANNOTATION</scope>
</reference>
<reference key="4">
    <citation type="journal article" date="2006" name="J. Virol.">
        <title>Common and specific properties of herpesvirus UL34/UL31 protein family members revealed by protein complementation assay.</title>
        <authorList>
            <person name="Schnee M."/>
            <person name="Ruzsics Z."/>
            <person name="Bubeck A."/>
            <person name="Koszinowski U.H."/>
        </authorList>
    </citation>
    <scope>INTERACTION WITH BFRF1</scope>
</reference>
<reference key="5">
    <citation type="journal article" date="2022" name="PLoS Pathog.">
        <title>The nuclear egress complex of Epstein-Barr virus buds membranes through an oligomerization-driven mechanism.</title>
        <authorList>
            <person name="Thorsen M.K."/>
            <person name="Draganova E.B."/>
            <person name="Heldwein E.E."/>
        </authorList>
    </citation>
    <scope>X-RAY CRYSTALLOGRAPHY (3.97 ANGSTROMS) OF 66-318 IN COMPLEX WITH NEC1 AND ZINC</scope>
    <scope>SUBUNIT</scope>
    <scope>MUTAGENESIS OF LEU-262 AND PHE-267</scope>
</reference>
<proteinExistence type="evidence at protein level"/>
<name>NEC1_EBVB9</name>
<dbReference type="EMBL" id="V01555">
    <property type="status" value="NOT_ANNOTATED_CDS"/>
    <property type="molecule type" value="Genomic_DNA"/>
</dbReference>
<dbReference type="EMBL" id="AJ507799">
    <property type="protein sequence ID" value="CAD53397.1"/>
    <property type="molecule type" value="Genomic_DNA"/>
</dbReference>
<dbReference type="EMBL" id="M11923">
    <property type="protein sequence ID" value="AAA45866.1"/>
    <property type="molecule type" value="Genomic_DNA"/>
</dbReference>
<dbReference type="PIR" id="D93065">
    <property type="entry name" value="QQBE5"/>
</dbReference>
<dbReference type="RefSeq" id="YP_401647.1">
    <property type="nucleotide sequence ID" value="NC_007605.1"/>
</dbReference>
<dbReference type="PDB" id="7T7I">
    <property type="method" value="X-ray"/>
    <property type="resolution" value="3.97 A"/>
    <property type="chains" value="B/D/F/H/J=66-318"/>
</dbReference>
<dbReference type="PDBsum" id="7T7I"/>
<dbReference type="SMR" id="P0CK47"/>
<dbReference type="IntAct" id="P0CK47">
    <property type="interactions" value="22"/>
</dbReference>
<dbReference type="DNASU" id="3783698"/>
<dbReference type="GeneID" id="3783698"/>
<dbReference type="KEGG" id="vg:3783698"/>
<dbReference type="Proteomes" id="UP000153037">
    <property type="component" value="Segment"/>
</dbReference>
<dbReference type="GO" id="GO:0044201">
    <property type="term" value="C:host cell nuclear inner membrane"/>
    <property type="evidence" value="ECO:0007669"/>
    <property type="project" value="UniProtKB-SubCell"/>
</dbReference>
<dbReference type="GO" id="GO:0016020">
    <property type="term" value="C:membrane"/>
    <property type="evidence" value="ECO:0007669"/>
    <property type="project" value="UniProtKB-KW"/>
</dbReference>
<dbReference type="GO" id="GO:0008270">
    <property type="term" value="F:zinc ion binding"/>
    <property type="evidence" value="ECO:0007669"/>
    <property type="project" value="UniProtKB-KW"/>
</dbReference>
<dbReference type="GO" id="GO:0046765">
    <property type="term" value="P:viral budding from nuclear membrane"/>
    <property type="evidence" value="ECO:0000314"/>
    <property type="project" value="UniProtKB"/>
</dbReference>
<dbReference type="HAMAP" id="MF_04023">
    <property type="entry name" value="HSV_NEC1"/>
    <property type="match status" value="1"/>
</dbReference>
<dbReference type="InterPro" id="IPR021152">
    <property type="entry name" value="Herpes_UL31"/>
</dbReference>
<dbReference type="Pfam" id="PF02718">
    <property type="entry name" value="Herpes_UL31"/>
    <property type="match status" value="1"/>
</dbReference>
<gene>
    <name evidence="1" type="primary">NEC1</name>
    <name type="ORF">BFLF2</name>
</gene>
<organismHost>
    <name type="scientific">Homo sapiens</name>
    <name type="common">Human</name>
    <dbReference type="NCBI Taxonomy" id="9606"/>
</organismHost>
<feature type="chain" id="PRO_0000116012" description="Nuclear egress protein 1">
    <location>
        <begin position="1"/>
        <end position="318"/>
    </location>
</feature>
<feature type="zinc finger region" description="CCCH-type" evidence="1 2">
    <location>
        <begin position="129"/>
        <end position="239"/>
    </location>
</feature>
<feature type="mutagenesis site" description="83% loss of budding ability.">
    <original>L</original>
    <variation>F</variation>
    <location>
        <position position="262"/>
    </location>
</feature>
<feature type="mutagenesis site" description="93% loss of budding ability." evidence="2">
    <original>F</original>
    <variation>W</variation>
    <location>
        <position position="267"/>
    </location>
</feature>